<gene>
    <name evidence="1" type="primary">rsmH</name>
    <name type="synonym">mraW</name>
    <name type="ordered locus">Npun_R4969</name>
</gene>
<comment type="function">
    <text evidence="1">Specifically methylates the N4 position of cytidine in position 1402 (C1402) of 16S rRNA.</text>
</comment>
<comment type="catalytic activity">
    <reaction evidence="1">
        <text>cytidine(1402) in 16S rRNA + S-adenosyl-L-methionine = N(4)-methylcytidine(1402) in 16S rRNA + S-adenosyl-L-homocysteine + H(+)</text>
        <dbReference type="Rhea" id="RHEA:42928"/>
        <dbReference type="Rhea" id="RHEA-COMP:10286"/>
        <dbReference type="Rhea" id="RHEA-COMP:10287"/>
        <dbReference type="ChEBI" id="CHEBI:15378"/>
        <dbReference type="ChEBI" id="CHEBI:57856"/>
        <dbReference type="ChEBI" id="CHEBI:59789"/>
        <dbReference type="ChEBI" id="CHEBI:74506"/>
        <dbReference type="ChEBI" id="CHEBI:82748"/>
        <dbReference type="EC" id="2.1.1.199"/>
    </reaction>
</comment>
<comment type="subcellular location">
    <subcellularLocation>
        <location evidence="1">Cytoplasm</location>
    </subcellularLocation>
</comment>
<comment type="similarity">
    <text evidence="1">Belongs to the methyltransferase superfamily. RsmH family.</text>
</comment>
<dbReference type="EC" id="2.1.1.199" evidence="1"/>
<dbReference type="EMBL" id="CP001037">
    <property type="protein sequence ID" value="ACC83314.1"/>
    <property type="molecule type" value="Genomic_DNA"/>
</dbReference>
<dbReference type="RefSeq" id="WP_012411269.1">
    <property type="nucleotide sequence ID" value="NC_010628.1"/>
</dbReference>
<dbReference type="SMR" id="B2J183"/>
<dbReference type="STRING" id="63737.Npun_R4969"/>
<dbReference type="EnsemblBacteria" id="ACC83314">
    <property type="protein sequence ID" value="ACC83314"/>
    <property type="gene ID" value="Npun_R4969"/>
</dbReference>
<dbReference type="KEGG" id="npu:Npun_R4969"/>
<dbReference type="eggNOG" id="COG0275">
    <property type="taxonomic scope" value="Bacteria"/>
</dbReference>
<dbReference type="HOGENOM" id="CLU_038422_3_0_3"/>
<dbReference type="OrthoDB" id="9806637at2"/>
<dbReference type="PhylomeDB" id="B2J183"/>
<dbReference type="Proteomes" id="UP000001191">
    <property type="component" value="Chromosome"/>
</dbReference>
<dbReference type="GO" id="GO:0005737">
    <property type="term" value="C:cytoplasm"/>
    <property type="evidence" value="ECO:0007669"/>
    <property type="project" value="UniProtKB-SubCell"/>
</dbReference>
<dbReference type="GO" id="GO:0071424">
    <property type="term" value="F:rRNA (cytosine-N4-)-methyltransferase activity"/>
    <property type="evidence" value="ECO:0007669"/>
    <property type="project" value="UniProtKB-UniRule"/>
</dbReference>
<dbReference type="GO" id="GO:0070475">
    <property type="term" value="P:rRNA base methylation"/>
    <property type="evidence" value="ECO:0007669"/>
    <property type="project" value="UniProtKB-UniRule"/>
</dbReference>
<dbReference type="CDD" id="cd02440">
    <property type="entry name" value="AdoMet_MTases"/>
    <property type="match status" value="1"/>
</dbReference>
<dbReference type="Gene3D" id="1.10.150.170">
    <property type="entry name" value="Putative methyltransferase TM0872, insert domain"/>
    <property type="match status" value="1"/>
</dbReference>
<dbReference type="Gene3D" id="3.40.50.150">
    <property type="entry name" value="Vaccinia Virus protein VP39"/>
    <property type="match status" value="1"/>
</dbReference>
<dbReference type="HAMAP" id="MF_01007">
    <property type="entry name" value="16SrRNA_methyltr_H"/>
    <property type="match status" value="1"/>
</dbReference>
<dbReference type="InterPro" id="IPR002903">
    <property type="entry name" value="RsmH"/>
</dbReference>
<dbReference type="InterPro" id="IPR023397">
    <property type="entry name" value="SAM-dep_MeTrfase_MraW_recog"/>
</dbReference>
<dbReference type="InterPro" id="IPR029063">
    <property type="entry name" value="SAM-dependent_MTases_sf"/>
</dbReference>
<dbReference type="NCBIfam" id="TIGR00006">
    <property type="entry name" value="16S rRNA (cytosine(1402)-N(4))-methyltransferase RsmH"/>
    <property type="match status" value="1"/>
</dbReference>
<dbReference type="PANTHER" id="PTHR11265:SF0">
    <property type="entry name" value="12S RRNA N4-METHYLCYTIDINE METHYLTRANSFERASE"/>
    <property type="match status" value="1"/>
</dbReference>
<dbReference type="PANTHER" id="PTHR11265">
    <property type="entry name" value="S-ADENOSYL-METHYLTRANSFERASE MRAW"/>
    <property type="match status" value="1"/>
</dbReference>
<dbReference type="Pfam" id="PF01795">
    <property type="entry name" value="Methyltransf_5"/>
    <property type="match status" value="1"/>
</dbReference>
<dbReference type="PIRSF" id="PIRSF004486">
    <property type="entry name" value="MraW"/>
    <property type="match status" value="1"/>
</dbReference>
<dbReference type="SUPFAM" id="SSF81799">
    <property type="entry name" value="Putative methyltransferase TM0872, insert domain"/>
    <property type="match status" value="1"/>
</dbReference>
<dbReference type="SUPFAM" id="SSF53335">
    <property type="entry name" value="S-adenosyl-L-methionine-dependent methyltransferases"/>
    <property type="match status" value="1"/>
</dbReference>
<protein>
    <recommendedName>
        <fullName evidence="1">Ribosomal RNA small subunit methyltransferase H</fullName>
        <ecNumber evidence="1">2.1.1.199</ecNumber>
    </recommendedName>
    <alternativeName>
        <fullName evidence="1">16S rRNA m(4)C1402 methyltransferase</fullName>
    </alternativeName>
    <alternativeName>
        <fullName evidence="1">rRNA (cytosine-N(4)-)-methyltransferase RsmH</fullName>
    </alternativeName>
</protein>
<proteinExistence type="inferred from homology"/>
<feature type="chain" id="PRO_0000387012" description="Ribosomal RNA small subunit methyltransferase H">
    <location>
        <begin position="1"/>
        <end position="298"/>
    </location>
</feature>
<feature type="binding site" evidence="1">
    <location>
        <begin position="46"/>
        <end position="48"/>
    </location>
    <ligand>
        <name>S-adenosyl-L-methionine</name>
        <dbReference type="ChEBI" id="CHEBI:59789"/>
    </ligand>
</feature>
<feature type="binding site" evidence="1">
    <location>
        <position position="65"/>
    </location>
    <ligand>
        <name>S-adenosyl-L-methionine</name>
        <dbReference type="ChEBI" id="CHEBI:59789"/>
    </ligand>
</feature>
<feature type="binding site" evidence="1">
    <location>
        <position position="92"/>
    </location>
    <ligand>
        <name>S-adenosyl-L-methionine</name>
        <dbReference type="ChEBI" id="CHEBI:59789"/>
    </ligand>
</feature>
<feature type="binding site" evidence="1">
    <location>
        <position position="108"/>
    </location>
    <ligand>
        <name>S-adenosyl-L-methionine</name>
        <dbReference type="ChEBI" id="CHEBI:59789"/>
    </ligand>
</feature>
<feature type="binding site" evidence="1">
    <location>
        <position position="115"/>
    </location>
    <ligand>
        <name>S-adenosyl-L-methionine</name>
        <dbReference type="ChEBI" id="CHEBI:59789"/>
    </ligand>
</feature>
<organism>
    <name type="scientific">Nostoc punctiforme (strain ATCC 29133 / PCC 73102)</name>
    <dbReference type="NCBI Taxonomy" id="63737"/>
    <lineage>
        <taxon>Bacteria</taxon>
        <taxon>Bacillati</taxon>
        <taxon>Cyanobacteriota</taxon>
        <taxon>Cyanophyceae</taxon>
        <taxon>Nostocales</taxon>
        <taxon>Nostocaceae</taxon>
        <taxon>Nostoc</taxon>
    </lineage>
</organism>
<sequence length="298" mass="33299">MKSDLETPLNLEELAFSHISVLGREVIEGLAVRPGGHYLDVTVGGGGHSRLILEAAADVRVTAVDQDEDALVAANKNLAEYSDRIQFIYSNFADYEFPPNTFDGILADLGVSSYHLDQAERGFSFRQAANLDMRMDRGRSLTAADVINNWDEAELADIFFKYGEERLSRRIARRIVERRPLHTTTELADAIASSVPPKYRYGRIHPATRVFQALRIVVNDELKSLETFLDKAPNALVPGGRIAIISFHSLEDRPVKHGLRNSPLLKVLTKKPIIAQEEEISNNPRSRSAKLRIAEKLV</sequence>
<evidence type="ECO:0000255" key="1">
    <source>
        <dbReference type="HAMAP-Rule" id="MF_01007"/>
    </source>
</evidence>
<name>RSMH_NOSP7</name>
<keyword id="KW-0963">Cytoplasm</keyword>
<keyword id="KW-0489">Methyltransferase</keyword>
<keyword id="KW-1185">Reference proteome</keyword>
<keyword id="KW-0698">rRNA processing</keyword>
<keyword id="KW-0949">S-adenosyl-L-methionine</keyword>
<keyword id="KW-0808">Transferase</keyword>
<reference key="1">
    <citation type="journal article" date="2013" name="Plant Physiol.">
        <title>A Nostoc punctiforme Sugar Transporter Necessary to Establish a Cyanobacterium-Plant Symbiosis.</title>
        <authorList>
            <person name="Ekman M."/>
            <person name="Picossi S."/>
            <person name="Campbell E.L."/>
            <person name="Meeks J.C."/>
            <person name="Flores E."/>
        </authorList>
    </citation>
    <scope>NUCLEOTIDE SEQUENCE [LARGE SCALE GENOMIC DNA]</scope>
    <source>
        <strain>ATCC 29133 / PCC 73102</strain>
    </source>
</reference>
<accession>B2J183</accession>